<evidence type="ECO:0000256" key="1">
    <source>
        <dbReference type="SAM" id="MobiDB-lite"/>
    </source>
</evidence>
<evidence type="ECO:0000305" key="2"/>
<protein>
    <recommendedName>
        <fullName>REF/SRPP-like protein OsI_017815</fullName>
    </recommendedName>
</protein>
<feature type="chain" id="PRO_0000332746" description="REF/SRPP-like protein OsI_017815">
    <location>
        <begin position="1"/>
        <end position="253"/>
    </location>
</feature>
<feature type="region of interest" description="Disordered" evidence="1">
    <location>
        <begin position="1"/>
        <end position="26"/>
    </location>
</feature>
<feature type="compositionally biased region" description="Basic and acidic residues" evidence="1">
    <location>
        <begin position="13"/>
        <end position="26"/>
    </location>
</feature>
<gene>
    <name type="ORF">OsI_017815</name>
</gene>
<name>Y5513_ORYSI</name>
<comment type="similarity">
    <text evidence="2">Belongs to the REF/SRPP family.</text>
</comment>
<reference key="1">
    <citation type="journal article" date="2005" name="PLoS Biol.">
        <title>The genomes of Oryza sativa: a history of duplications.</title>
        <authorList>
            <person name="Yu J."/>
            <person name="Wang J."/>
            <person name="Lin W."/>
            <person name="Li S."/>
            <person name="Li H."/>
            <person name="Zhou J."/>
            <person name="Ni P."/>
            <person name="Dong W."/>
            <person name="Hu S."/>
            <person name="Zeng C."/>
            <person name="Zhang J."/>
            <person name="Zhang Y."/>
            <person name="Li R."/>
            <person name="Xu Z."/>
            <person name="Li S."/>
            <person name="Li X."/>
            <person name="Zheng H."/>
            <person name="Cong L."/>
            <person name="Lin L."/>
            <person name="Yin J."/>
            <person name="Geng J."/>
            <person name="Li G."/>
            <person name="Shi J."/>
            <person name="Liu J."/>
            <person name="Lv H."/>
            <person name="Li J."/>
            <person name="Wang J."/>
            <person name="Deng Y."/>
            <person name="Ran L."/>
            <person name="Shi X."/>
            <person name="Wang X."/>
            <person name="Wu Q."/>
            <person name="Li C."/>
            <person name="Ren X."/>
            <person name="Wang J."/>
            <person name="Wang X."/>
            <person name="Li D."/>
            <person name="Liu D."/>
            <person name="Zhang X."/>
            <person name="Ji Z."/>
            <person name="Zhao W."/>
            <person name="Sun Y."/>
            <person name="Zhang Z."/>
            <person name="Bao J."/>
            <person name="Han Y."/>
            <person name="Dong L."/>
            <person name="Ji J."/>
            <person name="Chen P."/>
            <person name="Wu S."/>
            <person name="Liu J."/>
            <person name="Xiao Y."/>
            <person name="Bu D."/>
            <person name="Tan J."/>
            <person name="Yang L."/>
            <person name="Ye C."/>
            <person name="Zhang J."/>
            <person name="Xu J."/>
            <person name="Zhou Y."/>
            <person name="Yu Y."/>
            <person name="Zhang B."/>
            <person name="Zhuang S."/>
            <person name="Wei H."/>
            <person name="Liu B."/>
            <person name="Lei M."/>
            <person name="Yu H."/>
            <person name="Li Y."/>
            <person name="Xu H."/>
            <person name="Wei S."/>
            <person name="He X."/>
            <person name="Fang L."/>
            <person name="Zhang Z."/>
            <person name="Zhang Y."/>
            <person name="Huang X."/>
            <person name="Su Z."/>
            <person name="Tong W."/>
            <person name="Li J."/>
            <person name="Tong Z."/>
            <person name="Li S."/>
            <person name="Ye J."/>
            <person name="Wang L."/>
            <person name="Fang L."/>
            <person name="Lei T."/>
            <person name="Chen C.-S."/>
            <person name="Chen H.-C."/>
            <person name="Xu Z."/>
            <person name="Li H."/>
            <person name="Huang H."/>
            <person name="Zhang F."/>
            <person name="Xu H."/>
            <person name="Li N."/>
            <person name="Zhao C."/>
            <person name="Li S."/>
            <person name="Dong L."/>
            <person name="Huang Y."/>
            <person name="Li L."/>
            <person name="Xi Y."/>
            <person name="Qi Q."/>
            <person name="Li W."/>
            <person name="Zhang B."/>
            <person name="Hu W."/>
            <person name="Zhang Y."/>
            <person name="Tian X."/>
            <person name="Jiao Y."/>
            <person name="Liang X."/>
            <person name="Jin J."/>
            <person name="Gao L."/>
            <person name="Zheng W."/>
            <person name="Hao B."/>
            <person name="Liu S.-M."/>
            <person name="Wang W."/>
            <person name="Yuan L."/>
            <person name="Cao M."/>
            <person name="McDermott J."/>
            <person name="Samudrala R."/>
            <person name="Wang J."/>
            <person name="Wong G.K.-S."/>
            <person name="Yang H."/>
        </authorList>
    </citation>
    <scope>NUCLEOTIDE SEQUENCE [LARGE SCALE GENOMIC DNA]</scope>
    <source>
        <strain>cv. 93-11</strain>
    </source>
</reference>
<keyword id="KW-1185">Reference proteome</keyword>
<proteinExistence type="inferred from homology"/>
<organism>
    <name type="scientific">Oryza sativa subsp. indica</name>
    <name type="common">Rice</name>
    <dbReference type="NCBI Taxonomy" id="39946"/>
    <lineage>
        <taxon>Eukaryota</taxon>
        <taxon>Viridiplantae</taxon>
        <taxon>Streptophyta</taxon>
        <taxon>Embryophyta</taxon>
        <taxon>Tracheophyta</taxon>
        <taxon>Spermatophyta</taxon>
        <taxon>Magnoliopsida</taxon>
        <taxon>Liliopsida</taxon>
        <taxon>Poales</taxon>
        <taxon>Poaceae</taxon>
        <taxon>BOP clade</taxon>
        <taxon>Oryzoideae</taxon>
        <taxon>Oryzeae</taxon>
        <taxon>Oryzinae</taxon>
        <taxon>Oryza</taxon>
        <taxon>Oryza sativa</taxon>
    </lineage>
</organism>
<dbReference type="EMBL" id="CM000130">
    <property type="protein sequence ID" value="EAY96582.1"/>
    <property type="molecule type" value="Genomic_DNA"/>
</dbReference>
<dbReference type="STRING" id="39946.A2Y0H2"/>
<dbReference type="EnsemblPlants" id="BGIOSGA018789-TA">
    <property type="protein sequence ID" value="BGIOSGA018789-PA"/>
    <property type="gene ID" value="BGIOSGA018789"/>
</dbReference>
<dbReference type="EnsemblPlants" id="OsGoSa_05g0003740.01">
    <property type="protein sequence ID" value="OsGoSa_05g0003740.01"/>
    <property type="gene ID" value="OsGoSa_05g0003740"/>
</dbReference>
<dbReference type="EnsemblPlants" id="OsIR64_05g0003580.01">
    <property type="protein sequence ID" value="OsIR64_05g0003580.01"/>
    <property type="gene ID" value="OsIR64_05g0003580"/>
</dbReference>
<dbReference type="EnsemblPlants" id="OsKYG_05g0003620.01">
    <property type="protein sequence ID" value="OsKYG_05g0003620.01"/>
    <property type="gene ID" value="OsKYG_05g0003620"/>
</dbReference>
<dbReference type="EnsemblPlants" id="OsLaMu_05g0003810.01">
    <property type="protein sequence ID" value="OsLaMu_05g0003810.01"/>
    <property type="gene ID" value="OsLaMu_05g0003810"/>
</dbReference>
<dbReference type="EnsemblPlants" id="OsLima_05g0003700.01">
    <property type="protein sequence ID" value="OsLima_05g0003700.01"/>
    <property type="gene ID" value="OsLima_05g0003700"/>
</dbReference>
<dbReference type="EnsemblPlants" id="OsLiXu_05g0003760.01">
    <property type="protein sequence ID" value="OsLiXu_05g0003760.01"/>
    <property type="gene ID" value="OsLiXu_05g0003760"/>
</dbReference>
<dbReference type="EnsemblPlants" id="OsMH63_05G003740_01">
    <property type="protein sequence ID" value="OsMH63_05G003740_01"/>
    <property type="gene ID" value="OsMH63_05G003740"/>
</dbReference>
<dbReference type="EnsemblPlants" id="OsPr106_05g0003810.01">
    <property type="protein sequence ID" value="OsPr106_05g0003810.01"/>
    <property type="gene ID" value="OsPr106_05g0003810"/>
</dbReference>
<dbReference type="EnsemblPlants" id="OsZS97_05G003770_01">
    <property type="protein sequence ID" value="OsZS97_05G003770_01"/>
    <property type="gene ID" value="OsZS97_05G003770"/>
</dbReference>
<dbReference type="Gramene" id="BGIOSGA018789-TA">
    <property type="protein sequence ID" value="BGIOSGA018789-PA"/>
    <property type="gene ID" value="BGIOSGA018789"/>
</dbReference>
<dbReference type="Gramene" id="OsGoSa_05g0003740.01">
    <property type="protein sequence ID" value="OsGoSa_05g0003740.01"/>
    <property type="gene ID" value="OsGoSa_05g0003740"/>
</dbReference>
<dbReference type="Gramene" id="OsIR64_05g0003580.01">
    <property type="protein sequence ID" value="OsIR64_05g0003580.01"/>
    <property type="gene ID" value="OsIR64_05g0003580"/>
</dbReference>
<dbReference type="Gramene" id="OsKYG_05g0003620.01">
    <property type="protein sequence ID" value="OsKYG_05g0003620.01"/>
    <property type="gene ID" value="OsKYG_05g0003620"/>
</dbReference>
<dbReference type="Gramene" id="OsLaMu_05g0003810.01">
    <property type="protein sequence ID" value="OsLaMu_05g0003810.01"/>
    <property type="gene ID" value="OsLaMu_05g0003810"/>
</dbReference>
<dbReference type="Gramene" id="OsLima_05g0003700.01">
    <property type="protein sequence ID" value="OsLima_05g0003700.01"/>
    <property type="gene ID" value="OsLima_05g0003700"/>
</dbReference>
<dbReference type="Gramene" id="OsLiXu_05g0003760.01">
    <property type="protein sequence ID" value="OsLiXu_05g0003760.01"/>
    <property type="gene ID" value="OsLiXu_05g0003760"/>
</dbReference>
<dbReference type="Gramene" id="OsMH63_05G003740_01">
    <property type="protein sequence ID" value="OsMH63_05G003740_01"/>
    <property type="gene ID" value="OsMH63_05G003740"/>
</dbReference>
<dbReference type="Gramene" id="OsPr106_05g0003810.01">
    <property type="protein sequence ID" value="OsPr106_05g0003810.01"/>
    <property type="gene ID" value="OsPr106_05g0003810"/>
</dbReference>
<dbReference type="Gramene" id="OsZS97_05G003770_01">
    <property type="protein sequence ID" value="OsZS97_05G003770_01"/>
    <property type="gene ID" value="OsZS97_05G003770"/>
</dbReference>
<dbReference type="HOGENOM" id="CLU_069928_1_0_1"/>
<dbReference type="OMA" id="SEKYNVM"/>
<dbReference type="OrthoDB" id="1905464at2759"/>
<dbReference type="Proteomes" id="UP000007015">
    <property type="component" value="Chromosome 5"/>
</dbReference>
<dbReference type="InterPro" id="IPR008802">
    <property type="entry name" value="REF"/>
</dbReference>
<dbReference type="PANTHER" id="PTHR33732">
    <property type="entry name" value="REF/SRPP-LIKE PROTEIN OS05G0151300/LOC_OS05G05940"/>
    <property type="match status" value="1"/>
</dbReference>
<dbReference type="PANTHER" id="PTHR33732:SF9">
    <property type="entry name" value="REF_SRPP-LIKE PROTEIN OS05G0151300_LOC_OS05G05940"/>
    <property type="match status" value="1"/>
</dbReference>
<dbReference type="Pfam" id="PF05755">
    <property type="entry name" value="REF"/>
    <property type="match status" value="1"/>
</dbReference>
<accession>A2Y0H2</accession>
<sequence>MADSGSDAPISNRPEEEVTVEKTPEMEAAAEEERLRYLEFVQQAAAQVLVLAAAAYAYAKQGAGPLRPGVDHVEGTVKAVVGPVYDRFHGVPLDLLKFLDRKVGESVQELDRRVPPVVKEAPGLARSAAAEVRQAGLVGTATGLAKSAIARAEPRARDLYTRYEPVAERKAAEAWAALNRLPLVPSVTRAVLPAAASLSARYNTAVADGAKRGSAVATYLPLVPTERLSRVFGYPLADAAASPAPEMQPIPSQ</sequence>